<sequence>MIAKTVAVLALAGSAAAYAPTMSLSANRRELVQGAAAAAVVAPLLRPTGASARDAQLRAPIVEIFDARGCDAKNAQYTGPKSNDMNDDQCVKVSMQKITVSEATAAKKLQEFIGGKATAINVPIISSMTKKY</sequence>
<keyword id="KW-0002">3D-structure</keyword>
<keyword id="KW-0089">Bile pigment</keyword>
<keyword id="KW-0150">Chloroplast</keyword>
<keyword id="KW-0157">Chromophore</keyword>
<keyword id="KW-0249">Electron transport</keyword>
<keyword id="KW-0472">Membrane</keyword>
<keyword id="KW-0602">Photosynthesis</keyword>
<keyword id="KW-0934">Plastid</keyword>
<keyword id="KW-0793">Thylakoid</keyword>
<keyword id="KW-0813">Transport</keyword>
<comment type="function">
    <text evidence="3">Light-harvesting photosynthetic tetrapyrrole chromophore-protein from the phycobiliprotein complex.</text>
</comment>
<comment type="subunit">
    <text evidence="1">Heterotetramer of 2 different alpha chains and 2 identical beta chains which form 2 alpha-beta heterodimers within the heterotetramer.</text>
</comment>
<comment type="subcellular location">
    <subcellularLocation>
        <location evidence="3">Plastid</location>
        <location evidence="3">Chloroplast thylakoid membrane</location>
        <topology evidence="3">Peripheral membrane protein</topology>
        <orientation evidence="3">Lumenal side</orientation>
    </subcellularLocation>
</comment>
<comment type="PTM">
    <text evidence="1">Contains two phycocyanobilin chromophores, one mesobiliverdin chromophore and one 15,16-dihydrobiliverdin chromophore with binding mediated by both the alpha and beta subunits.</text>
</comment>
<comment type="miscellaneous">
    <text evidence="3">The light-harvesting system in Cryptophytes contains phycobiliprotein complexes. Unusually they are composed of either phycoerythrin (CPE) or phycocyanin (CPC) but never allophycocyanin (APC), with only one type of biliprotein being present in any one species. Unlike cyanobacteria or red algae these proteins are not arranged into higher-order phycobilisome complexes, and they are found in the thylakoid lumen.</text>
</comment>
<comment type="similarity">
    <text evidence="3">Belongs to the phycoerythrin family.</text>
</comment>
<reference evidence="4 5" key="1">
    <citation type="journal article" date="2014" name="Proc. Natl. Acad. Sci. U.S.A.">
        <title>Single-residue insertion switches the quaternary structure and exciton states of cryptophyte light-harvesting proteins.</title>
        <authorList>
            <person name="Harrop S.J."/>
            <person name="Wilk K.E."/>
            <person name="Dinshaw R."/>
            <person name="Collini E."/>
            <person name="Mirkovic T."/>
            <person name="Teng C.Y."/>
            <person name="Oblinsky D.G."/>
            <person name="Green B.R."/>
            <person name="Hoef-Emden K."/>
            <person name="Hiller R.G."/>
            <person name="Scholes G.D."/>
            <person name="Curmi P.M."/>
        </authorList>
    </citation>
    <scope>NUCLEOTIDE SEQUENCE [MRNA]</scope>
    <scope>X-RAY CRYSTALLOGRAPHY (1.35 ANGSTROMS) OF 53-132 IN COMPLEX WITH 15,16-DIHYDROBILIVERDIN; MESOBILIVERDIN AND PHYCOCYANOBILIN</scope>
    <scope>SUBUNIT</scope>
</reference>
<organism>
    <name type="scientific">Chroomonas sp. (strain CCMP270)</name>
    <dbReference type="NCBI Taxonomy" id="354589"/>
    <lineage>
        <taxon>Eukaryota</taxon>
        <taxon>Cryptophyceae</taxon>
        <taxon>Pyrenomonadales</taxon>
        <taxon>Chroomonadaceae</taxon>
        <taxon>Chroomonas</taxon>
    </lineage>
</organism>
<name>PHEA1_CHRS2</name>
<accession>U5T880</accession>
<proteinExistence type="evidence at protein level"/>
<protein>
    <recommendedName>
        <fullName evidence="3">Phycocyanin PC645 alpha-1 subunit</fullName>
        <shortName evidence="2">PC645A1</shortName>
    </recommendedName>
</protein>
<dbReference type="EMBL" id="KF314693">
    <property type="protein sequence ID" value="AGY96990.1"/>
    <property type="molecule type" value="mRNA"/>
</dbReference>
<dbReference type="PDB" id="4LMS">
    <property type="method" value="X-ray"/>
    <property type="resolution" value="1.35 A"/>
    <property type="chains" value="A=53-132"/>
</dbReference>
<dbReference type="PDBsum" id="4LMS"/>
<dbReference type="SMR" id="U5T880"/>
<dbReference type="EvolutionaryTrace" id="U5T880"/>
<dbReference type="GO" id="GO:0009535">
    <property type="term" value="C:chloroplast thylakoid membrane"/>
    <property type="evidence" value="ECO:0007669"/>
    <property type="project" value="UniProtKB-SubCell"/>
</dbReference>
<dbReference type="GO" id="GO:0030089">
    <property type="term" value="C:phycobilisome"/>
    <property type="evidence" value="ECO:0007669"/>
    <property type="project" value="InterPro"/>
</dbReference>
<dbReference type="GO" id="GO:0015979">
    <property type="term" value="P:photosynthesis"/>
    <property type="evidence" value="ECO:0007669"/>
    <property type="project" value="UniProtKB-KW"/>
</dbReference>
<dbReference type="Gene3D" id="3.90.510.10">
    <property type="entry name" value="Phycoerythrin alpha chain"/>
    <property type="match status" value="1"/>
</dbReference>
<dbReference type="InterPro" id="IPR011070">
    <property type="entry name" value="Globular_prot_asu/bsu"/>
</dbReference>
<dbReference type="InterPro" id="IPR037011">
    <property type="entry name" value="Phycoerythr-like_a_sf"/>
</dbReference>
<dbReference type="InterPro" id="IPR004228">
    <property type="entry name" value="Phycoerythr_a"/>
</dbReference>
<dbReference type="InterPro" id="IPR006311">
    <property type="entry name" value="TAT_signal"/>
</dbReference>
<dbReference type="Pfam" id="PF02972">
    <property type="entry name" value="Phycoerythr_ab"/>
    <property type="match status" value="1"/>
</dbReference>
<dbReference type="SUPFAM" id="SSF56568">
    <property type="entry name" value="Non-globular alpha+beta subunits of globular proteins"/>
    <property type="match status" value="1"/>
</dbReference>
<dbReference type="PROSITE" id="PS51318">
    <property type="entry name" value="TAT"/>
    <property type="match status" value="1"/>
</dbReference>
<geneLocation type="chloroplast" evidence="4"/>
<evidence type="ECO:0000269" key="1">
    <source>
    </source>
</evidence>
<evidence type="ECO:0000303" key="2">
    <source>
    </source>
</evidence>
<evidence type="ECO:0000305" key="3"/>
<evidence type="ECO:0000312" key="4">
    <source>
        <dbReference type="EMBL" id="AGY96990.1"/>
    </source>
</evidence>
<evidence type="ECO:0007744" key="5">
    <source>
        <dbReference type="PDB" id="4LMS"/>
    </source>
</evidence>
<evidence type="ECO:0007829" key="6">
    <source>
        <dbReference type="PDB" id="4LMS"/>
    </source>
</evidence>
<feature type="chain" id="PRO_5004664466" description="Phycocyanin PC645 alpha-1 subunit">
    <location>
        <begin position="1"/>
        <end position="132"/>
    </location>
</feature>
<feature type="binding site" evidence="1 5">
    <location>
        <position position="54"/>
    </location>
    <ligand>
        <name>(2R,3E)-phycocyanobilin</name>
        <dbReference type="ChEBI" id="CHEBI:85275"/>
        <label>1</label>
        <note>ligand shared with beta subunit</note>
    </ligand>
</feature>
<feature type="binding site" evidence="1 5">
    <location>
        <position position="68"/>
    </location>
    <ligand>
        <name>(2R,3E)-phycocyanobilin</name>
        <dbReference type="ChEBI" id="CHEBI:85275"/>
        <label>2</label>
        <note>ligand shared with beta subunit</note>
    </ligand>
</feature>
<feature type="binding site" description="covalent" evidence="1 5">
    <location>
        <position position="70"/>
    </location>
    <ligand>
        <name>mesobiliverdin</name>
        <dbReference type="ChEBI" id="CHEBI:189061"/>
        <note>ligand shared with beta subunit</note>
    </ligand>
</feature>
<feature type="binding site" evidence="1 5">
    <location>
        <position position="76"/>
    </location>
    <ligand>
        <name>mesobiliverdin</name>
        <dbReference type="ChEBI" id="CHEBI:189061"/>
        <note>ligand shared with beta subunit</note>
    </ligand>
</feature>
<feature type="binding site" evidence="1 5">
    <location>
        <position position="77"/>
    </location>
    <ligand>
        <name>mesobiliverdin</name>
        <dbReference type="ChEBI" id="CHEBI:189061"/>
        <note>ligand shared with beta subunit</note>
    </ligand>
</feature>
<feature type="binding site" evidence="1 5">
    <location>
        <position position="92"/>
    </location>
    <ligand>
        <name>mesobiliverdin</name>
        <dbReference type="ChEBI" id="CHEBI:189061"/>
        <note>ligand shared with beta subunit</note>
    </ligand>
</feature>
<feature type="binding site" evidence="1 5">
    <location>
        <position position="123"/>
    </location>
    <ligand>
        <name>15,16-dihydrobiliverdin</name>
        <dbReference type="ChEBI" id="CHEBI:57899"/>
        <note>ligand shared with beta subunit</note>
    </ligand>
</feature>
<feature type="binding site" evidence="1 5">
    <location>
        <position position="125"/>
    </location>
    <ligand>
        <name>15,16-dihydrobiliverdin</name>
        <dbReference type="ChEBI" id="CHEBI:57899"/>
        <note>ligand shared with beta subunit</note>
    </ligand>
</feature>
<feature type="strand" evidence="6">
    <location>
        <begin position="58"/>
        <end position="66"/>
    </location>
</feature>
<feature type="helix" evidence="6">
    <location>
        <begin position="85"/>
        <end position="88"/>
    </location>
</feature>
<feature type="strand" evidence="6">
    <location>
        <begin position="89"/>
        <end position="97"/>
    </location>
</feature>
<feature type="helix" evidence="6">
    <location>
        <begin position="102"/>
        <end position="112"/>
    </location>
</feature>